<sequence>MAKFAPVQYKYIIKAEFEIDGIVDREDIIGAIFGQTEGLLGMELDLRELQKQGKLGRIEVEYKRVGNKTIGTITIPTSLKAVETSLIAAAIETVDRVGPAKARFRVKEIVDVRSSKREYIRNRAKELFVQLLSKTAPDIEELRRELEEAYYSKQLIEYGEEKLPAGPLVEKSDEIILVEGRADVVNLVKHGILNVLGMNGINIPKSVVELSKRKKVTLFIDGDRGGELVLRNLLAAGADIDYVAVAPPGREVEELTNKEILKALKSKIPLEQYIKNLRISINNDENKEKYKELLSKVFDTKKAIVFDEQFNIIDEKPLEEIDKLPSAYGIAIDKILDNETYAKIKGKYQLILALDSNVNAQERVITLKDIQ</sequence>
<name>DNAG_NANEQ</name>
<evidence type="ECO:0000255" key="1">
    <source>
        <dbReference type="HAMAP-Rule" id="MF_00007"/>
    </source>
</evidence>
<protein>
    <recommendedName>
        <fullName evidence="1">DNA primase DnaG</fullName>
        <ecNumber evidence="1">2.7.7.101</ecNumber>
    </recommendedName>
</protein>
<accession>Q74MB1</accession>
<comment type="function">
    <text evidence="1">RNA polymerase that catalyzes the synthesis of short RNA molecules used as primers for DNA polymerase during DNA replication. Also part of the exosome, which is a complex involved in RNA degradation. Acts as a poly(A)-binding protein that enhances the interaction between heteromeric, adenine-rich transcripts and the exosome.</text>
</comment>
<comment type="catalytic activity">
    <reaction evidence="1">
        <text>ssDNA + n NTP = ssDNA/pppN(pN)n-1 hybrid + (n-1) diphosphate.</text>
        <dbReference type="EC" id="2.7.7.101"/>
    </reaction>
</comment>
<comment type="cofactor">
    <cofactor evidence="1">
        <name>Mg(2+)</name>
        <dbReference type="ChEBI" id="CHEBI:18420"/>
    </cofactor>
    <text evidence="1">Binds two Mg(2+) per subunit.</text>
</comment>
<comment type="subunit">
    <text evidence="1">Forms a ternary complex with MCM helicase and DNA. Component of the archaeal exosome complex.</text>
</comment>
<comment type="similarity">
    <text evidence="1">Belongs to the archaeal DnaG primase family.</text>
</comment>
<feature type="chain" id="PRO_0000240463" description="DNA primase DnaG">
    <location>
        <begin position="1"/>
        <end position="371"/>
    </location>
</feature>
<feature type="domain" description="Toprim" evidence="1">
    <location>
        <begin position="173"/>
        <end position="248"/>
    </location>
</feature>
<feature type="binding site" evidence="1">
    <location>
        <position position="179"/>
    </location>
    <ligand>
        <name>Mg(2+)</name>
        <dbReference type="ChEBI" id="CHEBI:18420"/>
        <label>1</label>
        <note>catalytic</note>
    </ligand>
</feature>
<feature type="binding site" evidence="1">
    <location>
        <position position="221"/>
    </location>
    <ligand>
        <name>Mg(2+)</name>
        <dbReference type="ChEBI" id="CHEBI:18420"/>
        <label>1</label>
        <note>catalytic</note>
    </ligand>
</feature>
<feature type="binding site" evidence="1">
    <location>
        <position position="221"/>
    </location>
    <ligand>
        <name>Mg(2+)</name>
        <dbReference type="ChEBI" id="CHEBI:18420"/>
        <label>2</label>
    </ligand>
</feature>
<feature type="binding site" evidence="1">
    <location>
        <position position="223"/>
    </location>
    <ligand>
        <name>Mg(2+)</name>
        <dbReference type="ChEBI" id="CHEBI:18420"/>
        <label>2</label>
    </ligand>
</feature>
<dbReference type="EC" id="2.7.7.101" evidence="1"/>
<dbReference type="EMBL" id="AE017199">
    <property type="protein sequence ID" value="AAR39189.1"/>
    <property type="molecule type" value="Genomic_DNA"/>
</dbReference>
<dbReference type="SMR" id="Q74MB1"/>
<dbReference type="STRING" id="228908.NEQ341"/>
<dbReference type="EnsemblBacteria" id="AAR39189">
    <property type="protein sequence ID" value="AAR39189"/>
    <property type="gene ID" value="NEQ341"/>
</dbReference>
<dbReference type="KEGG" id="neq:NEQ341"/>
<dbReference type="PATRIC" id="fig|228908.8.peg.350"/>
<dbReference type="HOGENOM" id="CLU_034626_0_0_2"/>
<dbReference type="Proteomes" id="UP000000578">
    <property type="component" value="Chromosome"/>
</dbReference>
<dbReference type="GO" id="GO:0005737">
    <property type="term" value="C:cytoplasm"/>
    <property type="evidence" value="ECO:0007669"/>
    <property type="project" value="TreeGrafter"/>
</dbReference>
<dbReference type="GO" id="GO:0000428">
    <property type="term" value="C:DNA-directed RNA polymerase complex"/>
    <property type="evidence" value="ECO:0007669"/>
    <property type="project" value="UniProtKB-KW"/>
</dbReference>
<dbReference type="GO" id="GO:0000178">
    <property type="term" value="C:exosome (RNase complex)"/>
    <property type="evidence" value="ECO:0007669"/>
    <property type="project" value="UniProtKB-KW"/>
</dbReference>
<dbReference type="GO" id="GO:1990077">
    <property type="term" value="C:primosome complex"/>
    <property type="evidence" value="ECO:0007669"/>
    <property type="project" value="UniProtKB-KW"/>
</dbReference>
<dbReference type="GO" id="GO:0003899">
    <property type="term" value="F:DNA-directed RNA polymerase activity"/>
    <property type="evidence" value="ECO:0007669"/>
    <property type="project" value="InterPro"/>
</dbReference>
<dbReference type="GO" id="GO:0046872">
    <property type="term" value="F:metal ion binding"/>
    <property type="evidence" value="ECO:0007669"/>
    <property type="project" value="UniProtKB-KW"/>
</dbReference>
<dbReference type="GO" id="GO:0008143">
    <property type="term" value="F:poly(A) binding"/>
    <property type="evidence" value="ECO:0007669"/>
    <property type="project" value="InterPro"/>
</dbReference>
<dbReference type="GO" id="GO:0006269">
    <property type="term" value="P:DNA replication, synthesis of primer"/>
    <property type="evidence" value="ECO:0007669"/>
    <property type="project" value="UniProtKB-UniRule"/>
</dbReference>
<dbReference type="CDD" id="cd01029">
    <property type="entry name" value="TOPRIM_primases"/>
    <property type="match status" value="1"/>
</dbReference>
<dbReference type="Gene3D" id="3.40.1360.10">
    <property type="match status" value="1"/>
</dbReference>
<dbReference type="HAMAP" id="MF_00007">
    <property type="entry name" value="DNA_primase_DnaG_arc"/>
    <property type="match status" value="1"/>
</dbReference>
<dbReference type="InterPro" id="IPR050219">
    <property type="entry name" value="DnaG_primase"/>
</dbReference>
<dbReference type="InterPro" id="IPR020607">
    <property type="entry name" value="Primase_DnaG_arc"/>
</dbReference>
<dbReference type="InterPro" id="IPR034154">
    <property type="entry name" value="TOPRIM_DnaG/twinkle"/>
</dbReference>
<dbReference type="InterPro" id="IPR006171">
    <property type="entry name" value="TOPRIM_dom"/>
</dbReference>
<dbReference type="NCBIfam" id="NF003108">
    <property type="entry name" value="PRK04031.1-1"/>
    <property type="match status" value="1"/>
</dbReference>
<dbReference type="PANTHER" id="PTHR30313">
    <property type="entry name" value="DNA PRIMASE"/>
    <property type="match status" value="1"/>
</dbReference>
<dbReference type="PANTHER" id="PTHR30313:SF2">
    <property type="entry name" value="DNA PRIMASE"/>
    <property type="match status" value="1"/>
</dbReference>
<dbReference type="Pfam" id="PF13662">
    <property type="entry name" value="Toprim_4"/>
    <property type="match status" value="1"/>
</dbReference>
<dbReference type="SMART" id="SM00493">
    <property type="entry name" value="TOPRIM"/>
    <property type="match status" value="1"/>
</dbReference>
<dbReference type="SUPFAM" id="SSF56731">
    <property type="entry name" value="DNA primase core"/>
    <property type="match status" value="1"/>
</dbReference>
<dbReference type="PROSITE" id="PS50880">
    <property type="entry name" value="TOPRIM"/>
    <property type="match status" value="1"/>
</dbReference>
<gene>
    <name evidence="1" type="primary">dnaG</name>
    <name type="ordered locus">NEQ341</name>
</gene>
<organism>
    <name type="scientific">Nanoarchaeum equitans (strain Kin4-M)</name>
    <dbReference type="NCBI Taxonomy" id="228908"/>
    <lineage>
        <taxon>Archaea</taxon>
        <taxon>Nanobdellota</taxon>
        <taxon>Candidatus Nanoarchaeia</taxon>
        <taxon>Nanoarchaeales</taxon>
        <taxon>Nanoarchaeaceae</taxon>
        <taxon>Nanoarchaeum</taxon>
    </lineage>
</organism>
<proteinExistence type="inferred from homology"/>
<reference key="1">
    <citation type="journal article" date="2003" name="Proc. Natl. Acad. Sci. U.S.A.">
        <title>The genome of Nanoarchaeum equitans: insights into early archaeal evolution and derived parasitism.</title>
        <authorList>
            <person name="Waters E."/>
            <person name="Hohn M.J."/>
            <person name="Ahel I."/>
            <person name="Graham D.E."/>
            <person name="Adams M.D."/>
            <person name="Barnstead M."/>
            <person name="Beeson K.Y."/>
            <person name="Bibbs L."/>
            <person name="Bolanos R."/>
            <person name="Keller M."/>
            <person name="Kretz K."/>
            <person name="Lin X."/>
            <person name="Mathur E."/>
            <person name="Ni J."/>
            <person name="Podar M."/>
            <person name="Richardson T."/>
            <person name="Sutton G.G."/>
            <person name="Simon M."/>
            <person name="Soell D."/>
            <person name="Stetter K.O."/>
            <person name="Short J.M."/>
            <person name="Noorderwier M."/>
        </authorList>
    </citation>
    <scope>NUCLEOTIDE SEQUENCE [LARGE SCALE GENOMIC DNA]</scope>
    <source>
        <strain>Kin4-M</strain>
    </source>
</reference>
<keyword id="KW-0235">DNA replication</keyword>
<keyword id="KW-0240">DNA-directed RNA polymerase</keyword>
<keyword id="KW-0271">Exosome</keyword>
<keyword id="KW-0460">Magnesium</keyword>
<keyword id="KW-0479">Metal-binding</keyword>
<keyword id="KW-0548">Nucleotidyltransferase</keyword>
<keyword id="KW-0639">Primosome</keyword>
<keyword id="KW-1185">Reference proteome</keyword>
<keyword id="KW-0804">Transcription</keyword>
<keyword id="KW-0808">Transferase</keyword>